<proteinExistence type="inferred from homology"/>
<name>SSRP_FERNB</name>
<reference key="1">
    <citation type="submission" date="2007-07" db="EMBL/GenBank/DDBJ databases">
        <title>Complete sequence of Fervidobacterium nodosum Rt17-B1.</title>
        <authorList>
            <consortium name="US DOE Joint Genome Institute"/>
            <person name="Copeland A."/>
            <person name="Lucas S."/>
            <person name="Lapidus A."/>
            <person name="Barry K."/>
            <person name="Glavina del Rio T."/>
            <person name="Dalin E."/>
            <person name="Tice H."/>
            <person name="Pitluck S."/>
            <person name="Saunders E."/>
            <person name="Brettin T."/>
            <person name="Bruce D."/>
            <person name="Detter J.C."/>
            <person name="Han C."/>
            <person name="Schmutz J."/>
            <person name="Larimer F."/>
            <person name="Land M."/>
            <person name="Hauser L."/>
            <person name="Kyrpides N."/>
            <person name="Mikhailova N."/>
            <person name="Nelson K."/>
            <person name="Gogarten J.P."/>
            <person name="Noll K."/>
            <person name="Richardson P."/>
        </authorList>
    </citation>
    <scope>NUCLEOTIDE SEQUENCE [LARGE SCALE GENOMIC DNA]</scope>
    <source>
        <strain>ATCC 35602 / DSM 5306 / Rt17-B1</strain>
    </source>
</reference>
<evidence type="ECO:0000255" key="1">
    <source>
        <dbReference type="HAMAP-Rule" id="MF_00023"/>
    </source>
</evidence>
<sequence>MRIIATNKKAYTDYIIDETYEAGIVLVGTEVKSLREHGASFKDSFCRVKEGEIWLLNLHIPPYQHGNIYNHDPERPRKLLLHKKEIDRIWSKLKLEGYTVIPTKIYFNNQGKVKVEIAIAKGKKSYDKREEIKKKETQKRIKEYLKYNR</sequence>
<feature type="chain" id="PRO_0000331046" description="SsrA-binding protein">
    <location>
        <begin position="1"/>
        <end position="149"/>
    </location>
</feature>
<gene>
    <name evidence="1" type="primary">smpB</name>
    <name type="ordered locus">Fnod_1508</name>
</gene>
<accession>A7HN68</accession>
<protein>
    <recommendedName>
        <fullName evidence="1">SsrA-binding protein</fullName>
    </recommendedName>
    <alternativeName>
        <fullName evidence="1">Small protein B</fullName>
    </alternativeName>
</protein>
<organism>
    <name type="scientific">Fervidobacterium nodosum (strain ATCC 35602 / DSM 5306 / Rt17-B1)</name>
    <dbReference type="NCBI Taxonomy" id="381764"/>
    <lineage>
        <taxon>Bacteria</taxon>
        <taxon>Thermotogati</taxon>
        <taxon>Thermotogota</taxon>
        <taxon>Thermotogae</taxon>
        <taxon>Thermotogales</taxon>
        <taxon>Fervidobacteriaceae</taxon>
        <taxon>Fervidobacterium</taxon>
    </lineage>
</organism>
<dbReference type="EMBL" id="CP000771">
    <property type="protein sequence ID" value="ABS61351.1"/>
    <property type="molecule type" value="Genomic_DNA"/>
</dbReference>
<dbReference type="RefSeq" id="WP_011994656.1">
    <property type="nucleotide sequence ID" value="NC_009718.1"/>
</dbReference>
<dbReference type="SMR" id="A7HN68"/>
<dbReference type="STRING" id="381764.Fnod_1508"/>
<dbReference type="KEGG" id="fno:Fnod_1508"/>
<dbReference type="eggNOG" id="COG0691">
    <property type="taxonomic scope" value="Bacteria"/>
</dbReference>
<dbReference type="HOGENOM" id="CLU_108953_0_0_0"/>
<dbReference type="OrthoDB" id="9805462at2"/>
<dbReference type="Proteomes" id="UP000002415">
    <property type="component" value="Chromosome"/>
</dbReference>
<dbReference type="GO" id="GO:0005829">
    <property type="term" value="C:cytosol"/>
    <property type="evidence" value="ECO:0007669"/>
    <property type="project" value="TreeGrafter"/>
</dbReference>
<dbReference type="GO" id="GO:0003723">
    <property type="term" value="F:RNA binding"/>
    <property type="evidence" value="ECO:0007669"/>
    <property type="project" value="UniProtKB-UniRule"/>
</dbReference>
<dbReference type="GO" id="GO:0070929">
    <property type="term" value="P:trans-translation"/>
    <property type="evidence" value="ECO:0007669"/>
    <property type="project" value="UniProtKB-UniRule"/>
</dbReference>
<dbReference type="CDD" id="cd09294">
    <property type="entry name" value="SmpB"/>
    <property type="match status" value="1"/>
</dbReference>
<dbReference type="Gene3D" id="2.40.280.10">
    <property type="match status" value="1"/>
</dbReference>
<dbReference type="HAMAP" id="MF_00023">
    <property type="entry name" value="SmpB"/>
    <property type="match status" value="1"/>
</dbReference>
<dbReference type="InterPro" id="IPR023620">
    <property type="entry name" value="SmpB"/>
</dbReference>
<dbReference type="InterPro" id="IPR000037">
    <property type="entry name" value="SsrA-bd_prot"/>
</dbReference>
<dbReference type="InterPro" id="IPR020081">
    <property type="entry name" value="SsrA-bd_prot_CS"/>
</dbReference>
<dbReference type="NCBIfam" id="NF003843">
    <property type="entry name" value="PRK05422.1"/>
    <property type="match status" value="1"/>
</dbReference>
<dbReference type="NCBIfam" id="TIGR00086">
    <property type="entry name" value="smpB"/>
    <property type="match status" value="1"/>
</dbReference>
<dbReference type="PANTHER" id="PTHR30308:SF2">
    <property type="entry name" value="SSRA-BINDING PROTEIN"/>
    <property type="match status" value="1"/>
</dbReference>
<dbReference type="PANTHER" id="PTHR30308">
    <property type="entry name" value="TMRNA-BINDING COMPONENT OF TRANS-TRANSLATION TAGGING COMPLEX"/>
    <property type="match status" value="1"/>
</dbReference>
<dbReference type="Pfam" id="PF01668">
    <property type="entry name" value="SmpB"/>
    <property type="match status" value="1"/>
</dbReference>
<dbReference type="SUPFAM" id="SSF74982">
    <property type="entry name" value="Small protein B (SmpB)"/>
    <property type="match status" value="1"/>
</dbReference>
<dbReference type="PROSITE" id="PS01317">
    <property type="entry name" value="SSRP"/>
    <property type="match status" value="1"/>
</dbReference>
<comment type="function">
    <text evidence="1">Required for rescue of stalled ribosomes mediated by trans-translation. Binds to transfer-messenger RNA (tmRNA), required for stable association of tmRNA with ribosomes. tmRNA and SmpB together mimic tRNA shape, replacing the anticodon stem-loop with SmpB. tmRNA is encoded by the ssrA gene; the 2 termini fold to resemble tRNA(Ala) and it encodes a 'tag peptide', a short internal open reading frame. During trans-translation Ala-aminoacylated tmRNA acts like a tRNA, entering the A-site of stalled ribosomes, displacing the stalled mRNA. The ribosome then switches to translate the ORF on the tmRNA; the nascent peptide is terminated with the 'tag peptide' encoded by the tmRNA and targeted for degradation. The ribosome is freed to recommence translation, which seems to be the essential function of trans-translation.</text>
</comment>
<comment type="subcellular location">
    <subcellularLocation>
        <location evidence="1">Cytoplasm</location>
    </subcellularLocation>
    <text evidence="1">The tmRNA-SmpB complex associates with stalled 70S ribosomes.</text>
</comment>
<comment type="similarity">
    <text evidence="1">Belongs to the SmpB family.</text>
</comment>
<keyword id="KW-0963">Cytoplasm</keyword>
<keyword id="KW-1185">Reference proteome</keyword>
<keyword id="KW-0694">RNA-binding</keyword>